<evidence type="ECO:0000255" key="1"/>
<evidence type="ECO:0000255" key="2">
    <source>
        <dbReference type="PROSITE-ProRule" id="PRU00434"/>
    </source>
</evidence>
<evidence type="ECO:0000256" key="3">
    <source>
        <dbReference type="SAM" id="MobiDB-lite"/>
    </source>
</evidence>
<evidence type="ECO:0000305" key="4"/>
<comment type="function">
    <text>May be part of a membrane-spanning permease system necessary for the transport of pigment precursors into pigment cells responsible for eye color.</text>
</comment>
<comment type="subcellular location">
    <subcellularLocation>
        <location>Membrane</location>
        <topology>Multi-pass membrane protein</topology>
    </subcellularLocation>
</comment>
<comment type="similarity">
    <text evidence="4">Belongs to the ABC transporter superfamily. ABCG family. Eye pigment precursor importer (TC 3.A.1.204) subfamily.</text>
</comment>
<organism>
    <name type="scientific">Anopheles albimanus</name>
    <name type="common">New world malaria mosquito</name>
    <dbReference type="NCBI Taxonomy" id="7167"/>
    <lineage>
        <taxon>Eukaryota</taxon>
        <taxon>Metazoa</taxon>
        <taxon>Ecdysozoa</taxon>
        <taxon>Arthropoda</taxon>
        <taxon>Hexapoda</taxon>
        <taxon>Insecta</taxon>
        <taxon>Pterygota</taxon>
        <taxon>Neoptera</taxon>
        <taxon>Endopterygota</taxon>
        <taxon>Diptera</taxon>
        <taxon>Nematocera</taxon>
        <taxon>Culicoidea</taxon>
        <taxon>Culicidae</taxon>
        <taxon>Anophelinae</taxon>
        <taxon>Anopheles</taxon>
    </lineage>
</organism>
<gene>
    <name type="primary">W</name>
</gene>
<name>WHITE_ANOAL</name>
<keyword id="KW-0067">ATP-binding</keyword>
<keyword id="KW-0325">Glycoprotein</keyword>
<keyword id="KW-0472">Membrane</keyword>
<keyword id="KW-0547">Nucleotide-binding</keyword>
<keyword id="KW-0608">Pigment</keyword>
<keyword id="KW-0812">Transmembrane</keyword>
<keyword id="KW-1133">Transmembrane helix</keyword>
<keyword id="KW-0813">Transport</keyword>
<proteinExistence type="inferred from homology"/>
<feature type="chain" id="PRO_0000093379" description="Protein white">
    <location>
        <begin position="1"/>
        <end position="709"/>
    </location>
</feature>
<feature type="transmembrane region" description="Helical" evidence="1">
    <location>
        <begin position="457"/>
        <end position="475"/>
    </location>
</feature>
<feature type="transmembrane region" description="Helical" evidence="1">
    <location>
        <begin position="487"/>
        <end position="507"/>
    </location>
</feature>
<feature type="transmembrane region" description="Helical" evidence="1">
    <location>
        <begin position="537"/>
        <end position="555"/>
    </location>
</feature>
<feature type="transmembrane region" description="Helical" evidence="1">
    <location>
        <begin position="564"/>
        <end position="585"/>
    </location>
</feature>
<feature type="transmembrane region" description="Helical" evidence="1">
    <location>
        <begin position="598"/>
        <end position="616"/>
    </location>
</feature>
<feature type="transmembrane region" description="Helical" evidence="1">
    <location>
        <begin position="681"/>
        <end position="700"/>
    </location>
</feature>
<feature type="domain" description="ABC transporter" evidence="2">
    <location>
        <begin position="103"/>
        <end position="348"/>
    </location>
</feature>
<feature type="region of interest" description="Disordered" evidence="3">
    <location>
        <begin position="1"/>
        <end position="35"/>
    </location>
</feature>
<feature type="compositionally biased region" description="Polar residues" evidence="3">
    <location>
        <begin position="15"/>
        <end position="32"/>
    </location>
</feature>
<feature type="binding site" evidence="2">
    <location>
        <begin position="136"/>
        <end position="143"/>
    </location>
    <ligand>
        <name>ATP</name>
        <dbReference type="ChEBI" id="CHEBI:30616"/>
    </ligand>
</feature>
<feature type="binding site" evidence="2">
    <location>
        <begin position="292"/>
        <end position="299"/>
    </location>
    <ligand>
        <name>ATP</name>
        <dbReference type="ChEBI" id="CHEBI:30616"/>
    </ligand>
</feature>
<feature type="glycosylation site" description="N-linked (GlcNAc...) asparagine" evidence="1">
    <location>
        <position position="485"/>
    </location>
</feature>
<feature type="glycosylation site" description="N-linked (GlcNAc...) asparagine" evidence="1">
    <location>
        <position position="658"/>
    </location>
</feature>
<protein>
    <recommendedName>
        <fullName>Protein white</fullName>
    </recommendedName>
</protein>
<dbReference type="EMBL" id="L76302">
    <property type="protein sequence ID" value="AAA88240.1"/>
    <property type="molecule type" value="Genomic_DNA"/>
</dbReference>
<dbReference type="SMR" id="Q16928"/>
<dbReference type="STRING" id="7167.Q16928"/>
<dbReference type="GlyCosmos" id="Q16928">
    <property type="glycosylation" value="2 sites, No reported glycans"/>
</dbReference>
<dbReference type="VEuPathDB" id="VectorBase:AALB006905"/>
<dbReference type="VEuPathDB" id="VectorBase:AALB20_033802"/>
<dbReference type="Proteomes" id="UP000069272">
    <property type="component" value="Unassembled WGS sequence"/>
</dbReference>
<dbReference type="GO" id="GO:0030659">
    <property type="term" value="C:cytoplasmic vesicle membrane"/>
    <property type="evidence" value="ECO:0007669"/>
    <property type="project" value="TreeGrafter"/>
</dbReference>
<dbReference type="GO" id="GO:0005886">
    <property type="term" value="C:plasma membrane"/>
    <property type="evidence" value="ECO:0007669"/>
    <property type="project" value="TreeGrafter"/>
</dbReference>
<dbReference type="GO" id="GO:0140359">
    <property type="term" value="F:ABC-type transporter activity"/>
    <property type="evidence" value="ECO:0007669"/>
    <property type="project" value="InterPro"/>
</dbReference>
<dbReference type="GO" id="GO:0005524">
    <property type="term" value="F:ATP binding"/>
    <property type="evidence" value="ECO:0007669"/>
    <property type="project" value="UniProtKB-KW"/>
</dbReference>
<dbReference type="GO" id="GO:0016887">
    <property type="term" value="F:ATP hydrolysis activity"/>
    <property type="evidence" value="ECO:0007669"/>
    <property type="project" value="InterPro"/>
</dbReference>
<dbReference type="GO" id="GO:0031409">
    <property type="term" value="F:pigment binding"/>
    <property type="evidence" value="ECO:0007669"/>
    <property type="project" value="UniProtKB-KW"/>
</dbReference>
<dbReference type="Gene3D" id="3.40.50.300">
    <property type="entry name" value="P-loop containing nucleotide triphosphate hydrolases"/>
    <property type="match status" value="1"/>
</dbReference>
<dbReference type="InterPro" id="IPR003593">
    <property type="entry name" value="AAA+_ATPase"/>
</dbReference>
<dbReference type="InterPro" id="IPR013525">
    <property type="entry name" value="ABC2_TM"/>
</dbReference>
<dbReference type="InterPro" id="IPR003439">
    <property type="entry name" value="ABC_transporter-like_ATP-bd"/>
</dbReference>
<dbReference type="InterPro" id="IPR043926">
    <property type="entry name" value="ABCG_dom"/>
</dbReference>
<dbReference type="InterPro" id="IPR050352">
    <property type="entry name" value="ABCG_transporters"/>
</dbReference>
<dbReference type="InterPro" id="IPR027417">
    <property type="entry name" value="P-loop_NTPase"/>
</dbReference>
<dbReference type="InterPro" id="IPR005284">
    <property type="entry name" value="Pigment_permease/Abcg"/>
</dbReference>
<dbReference type="NCBIfam" id="TIGR00955">
    <property type="entry name" value="3a01204"/>
    <property type="match status" value="1"/>
</dbReference>
<dbReference type="PANTHER" id="PTHR48041">
    <property type="entry name" value="ABC TRANSPORTER G FAMILY MEMBER 28"/>
    <property type="match status" value="1"/>
</dbReference>
<dbReference type="PANTHER" id="PTHR48041:SF129">
    <property type="entry name" value="PROTEIN WHITE"/>
    <property type="match status" value="1"/>
</dbReference>
<dbReference type="Pfam" id="PF01061">
    <property type="entry name" value="ABC2_membrane"/>
    <property type="match status" value="1"/>
</dbReference>
<dbReference type="Pfam" id="PF19055">
    <property type="entry name" value="ABC2_membrane_7"/>
    <property type="match status" value="1"/>
</dbReference>
<dbReference type="Pfam" id="PF00005">
    <property type="entry name" value="ABC_tran"/>
    <property type="match status" value="1"/>
</dbReference>
<dbReference type="SMART" id="SM00382">
    <property type="entry name" value="AAA"/>
    <property type="match status" value="1"/>
</dbReference>
<dbReference type="SUPFAM" id="SSF52540">
    <property type="entry name" value="P-loop containing nucleoside triphosphate hydrolases"/>
    <property type="match status" value="1"/>
</dbReference>
<dbReference type="PROSITE" id="PS50893">
    <property type="entry name" value="ABC_TRANSPORTER_2"/>
    <property type="match status" value="1"/>
</dbReference>
<sequence>MTINTDDQYADGESKTTISSNRRYSTSSFQDQSMEDDGINATLTNDKATLIQVWRPKSYGSVKGQIPAQDRLTYTWREIDVFGQAAIDGKSREPLCSRLRHCFTRQRLVKDFNPRKHLLKNVTGVARSGELLAVMGSSGAGKTTLLNELAFRSPPGVKISPNAIRTLNGVPVTAEQMRARCAYVQQDDLFIPSLTTKEHLMFQAMLRMGRDVPATPIKMHRVDEVLQELSLVKCADTIIGVAGRVKGLSGGERKRTAFRSETLTDPHLLLCDEPTSSLDSFMAQSVLQVLKGMAMKGKTIILTIHQPSSELYCLFDRILLVAEGVAFLGSPYQSADFFSQLGIPCPPNYNPADFYVQMLAIAPNKETECRETIKKICDSFAVSPIARDIIETASQVNGDGGIELTRTKHTTDPYFLQPMEGVDSTGYRASWWTQFYCILWRSWLSVLKDPMLVKVRLLQTAMVASLIGSIYFGQVLDQDGVMNINGSLFLFLTNMTFQNVFAVINVFSAELPVFLREKRSRLYRVDTYFLGKTIAELPLFIAVPFVFTSITYPMIGLKAAISHYLTTLFIVTLVANVSTSFGYLISCASSSISMALSVGPPVVIPFLIFGGFFLNSASVPAYFKYLSYLSWFRYANEALLINQWADHRDGEIGCTRANVTCPASGEIILETFNFRVEDFALDIGCLFALIVLFRLGALFCLWLRSRSKE</sequence>
<reference key="1">
    <citation type="journal article" date="1997" name="Genetica">
        <title>The Anopheles albimanus white gene: molecular characterization of the gene and a spontaneous white gene mutation.</title>
        <authorList>
            <person name="Ke Z."/>
            <person name="Benedict M.Q."/>
            <person name="Cornel A.J."/>
            <person name="Besansky N.J."/>
            <person name="Collins F.H."/>
        </authorList>
    </citation>
    <scope>NUCLEOTIDE SEQUENCE [GENOMIC DNA]</scope>
    <source>
        <strain>Teco</strain>
    </source>
</reference>
<accession>Q16928</accession>